<sequence>MIEELIRSEIRSFIPYNANQQPYKIKLDANESPFTLPPQMRKKLAEYILEDPQLNLYPDTDSVQLRQALGEYWSVDKENIIVGTGSDQLIQIIANVFLEKGDKVLYPTPSFGMYKDSCVIAGGRAVDYILDQNDNFSYSADKIIKTYELEQPKVIYICNPNNPTGNLMPQDEILRVLKACTKSVVVVDEAYAEFSDTTVIPFIKEYENLLILRTFSKAFGLAGIRCGYSIASEKLTRAVNLTRPPYNISSLSQFTAALILSYKEEIQNNIQYLVEERERVLSKLKEIDGLKVYSSAANFILIKVQNSKDIYRKLCEKGIFVRAFSSSPLLSDCMRITIGTQEQNSILLDELYAICYNK</sequence>
<feature type="chain" id="PRO_1000149088" description="Histidinol-phosphate aminotransferase">
    <location>
        <begin position="1"/>
        <end position="358"/>
    </location>
</feature>
<feature type="modified residue" description="N6-(pyridoxal phosphate)lysine" evidence="1">
    <location>
        <position position="217"/>
    </location>
</feature>
<accession>B8I5V1</accession>
<protein>
    <recommendedName>
        <fullName evidence="1">Histidinol-phosphate aminotransferase</fullName>
        <ecNumber evidence="1">2.6.1.9</ecNumber>
    </recommendedName>
    <alternativeName>
        <fullName evidence="1">Imidazole acetol-phosphate transaminase</fullName>
    </alternativeName>
</protein>
<organism>
    <name type="scientific">Ruminiclostridium cellulolyticum (strain ATCC 35319 / DSM 5812 / JCM 6584 / H10)</name>
    <name type="common">Clostridium cellulolyticum</name>
    <dbReference type="NCBI Taxonomy" id="394503"/>
    <lineage>
        <taxon>Bacteria</taxon>
        <taxon>Bacillati</taxon>
        <taxon>Bacillota</taxon>
        <taxon>Clostridia</taxon>
        <taxon>Eubacteriales</taxon>
        <taxon>Oscillospiraceae</taxon>
        <taxon>Ruminiclostridium</taxon>
    </lineage>
</organism>
<proteinExistence type="inferred from homology"/>
<dbReference type="EC" id="2.6.1.9" evidence="1"/>
<dbReference type="EMBL" id="CP001348">
    <property type="protein sequence ID" value="ACL74768.1"/>
    <property type="molecule type" value="Genomic_DNA"/>
</dbReference>
<dbReference type="RefSeq" id="WP_012634831.1">
    <property type="nucleotide sequence ID" value="NC_011898.1"/>
</dbReference>
<dbReference type="SMR" id="B8I5V1"/>
<dbReference type="STRING" id="394503.Ccel_0383"/>
<dbReference type="KEGG" id="cce:Ccel_0383"/>
<dbReference type="eggNOG" id="COG0079">
    <property type="taxonomic scope" value="Bacteria"/>
</dbReference>
<dbReference type="HOGENOM" id="CLU_017584_3_1_9"/>
<dbReference type="OrthoDB" id="9813612at2"/>
<dbReference type="UniPathway" id="UPA00031">
    <property type="reaction ID" value="UER00012"/>
</dbReference>
<dbReference type="Proteomes" id="UP000001349">
    <property type="component" value="Chromosome"/>
</dbReference>
<dbReference type="GO" id="GO:0004400">
    <property type="term" value="F:histidinol-phosphate transaminase activity"/>
    <property type="evidence" value="ECO:0007669"/>
    <property type="project" value="UniProtKB-UniRule"/>
</dbReference>
<dbReference type="GO" id="GO:0030170">
    <property type="term" value="F:pyridoxal phosphate binding"/>
    <property type="evidence" value="ECO:0007669"/>
    <property type="project" value="InterPro"/>
</dbReference>
<dbReference type="GO" id="GO:0000105">
    <property type="term" value="P:L-histidine biosynthetic process"/>
    <property type="evidence" value="ECO:0007669"/>
    <property type="project" value="UniProtKB-UniRule"/>
</dbReference>
<dbReference type="CDD" id="cd00609">
    <property type="entry name" value="AAT_like"/>
    <property type="match status" value="1"/>
</dbReference>
<dbReference type="Gene3D" id="3.90.1150.10">
    <property type="entry name" value="Aspartate Aminotransferase, domain 1"/>
    <property type="match status" value="1"/>
</dbReference>
<dbReference type="Gene3D" id="3.40.640.10">
    <property type="entry name" value="Type I PLP-dependent aspartate aminotransferase-like (Major domain)"/>
    <property type="match status" value="1"/>
</dbReference>
<dbReference type="HAMAP" id="MF_01023">
    <property type="entry name" value="HisC_aminotrans_2"/>
    <property type="match status" value="1"/>
</dbReference>
<dbReference type="InterPro" id="IPR001917">
    <property type="entry name" value="Aminotrans_II_pyridoxalP_BS"/>
</dbReference>
<dbReference type="InterPro" id="IPR004839">
    <property type="entry name" value="Aminotransferase_I/II_large"/>
</dbReference>
<dbReference type="InterPro" id="IPR005861">
    <property type="entry name" value="HisP_aminotrans"/>
</dbReference>
<dbReference type="InterPro" id="IPR015424">
    <property type="entry name" value="PyrdxlP-dep_Trfase"/>
</dbReference>
<dbReference type="InterPro" id="IPR015421">
    <property type="entry name" value="PyrdxlP-dep_Trfase_major"/>
</dbReference>
<dbReference type="InterPro" id="IPR015422">
    <property type="entry name" value="PyrdxlP-dep_Trfase_small"/>
</dbReference>
<dbReference type="NCBIfam" id="TIGR01141">
    <property type="entry name" value="hisC"/>
    <property type="match status" value="1"/>
</dbReference>
<dbReference type="PANTHER" id="PTHR42885:SF2">
    <property type="entry name" value="HISTIDINOL-PHOSPHATE AMINOTRANSFERASE"/>
    <property type="match status" value="1"/>
</dbReference>
<dbReference type="PANTHER" id="PTHR42885">
    <property type="entry name" value="HISTIDINOL-PHOSPHATE AMINOTRANSFERASE-RELATED"/>
    <property type="match status" value="1"/>
</dbReference>
<dbReference type="Pfam" id="PF00155">
    <property type="entry name" value="Aminotran_1_2"/>
    <property type="match status" value="1"/>
</dbReference>
<dbReference type="SUPFAM" id="SSF53383">
    <property type="entry name" value="PLP-dependent transferases"/>
    <property type="match status" value="1"/>
</dbReference>
<dbReference type="PROSITE" id="PS00599">
    <property type="entry name" value="AA_TRANSFER_CLASS_2"/>
    <property type="match status" value="1"/>
</dbReference>
<evidence type="ECO:0000255" key="1">
    <source>
        <dbReference type="HAMAP-Rule" id="MF_01023"/>
    </source>
</evidence>
<reference key="1">
    <citation type="submission" date="2009-01" db="EMBL/GenBank/DDBJ databases">
        <title>Complete sequence of Clostridium cellulolyticum H10.</title>
        <authorList>
            <consortium name="US DOE Joint Genome Institute"/>
            <person name="Lucas S."/>
            <person name="Copeland A."/>
            <person name="Lapidus A."/>
            <person name="Glavina del Rio T."/>
            <person name="Dalin E."/>
            <person name="Tice H."/>
            <person name="Bruce D."/>
            <person name="Goodwin L."/>
            <person name="Pitluck S."/>
            <person name="Chertkov O."/>
            <person name="Saunders E."/>
            <person name="Brettin T."/>
            <person name="Detter J.C."/>
            <person name="Han C."/>
            <person name="Larimer F."/>
            <person name="Land M."/>
            <person name="Hauser L."/>
            <person name="Kyrpides N."/>
            <person name="Ivanova N."/>
            <person name="Zhou J."/>
            <person name="Richardson P."/>
        </authorList>
    </citation>
    <scope>NUCLEOTIDE SEQUENCE [LARGE SCALE GENOMIC DNA]</scope>
    <source>
        <strain>ATCC 35319 / DSM 5812 / JCM 6584 / H10</strain>
    </source>
</reference>
<comment type="catalytic activity">
    <reaction evidence="1">
        <text>L-histidinol phosphate + 2-oxoglutarate = 3-(imidazol-4-yl)-2-oxopropyl phosphate + L-glutamate</text>
        <dbReference type="Rhea" id="RHEA:23744"/>
        <dbReference type="ChEBI" id="CHEBI:16810"/>
        <dbReference type="ChEBI" id="CHEBI:29985"/>
        <dbReference type="ChEBI" id="CHEBI:57766"/>
        <dbReference type="ChEBI" id="CHEBI:57980"/>
        <dbReference type="EC" id="2.6.1.9"/>
    </reaction>
</comment>
<comment type="cofactor">
    <cofactor evidence="1">
        <name>pyridoxal 5'-phosphate</name>
        <dbReference type="ChEBI" id="CHEBI:597326"/>
    </cofactor>
</comment>
<comment type="pathway">
    <text evidence="1">Amino-acid biosynthesis; L-histidine biosynthesis; L-histidine from 5-phospho-alpha-D-ribose 1-diphosphate: step 7/9.</text>
</comment>
<comment type="subunit">
    <text evidence="1">Homodimer.</text>
</comment>
<comment type="similarity">
    <text evidence="1">Belongs to the class-II pyridoxal-phosphate-dependent aminotransferase family. Histidinol-phosphate aminotransferase subfamily.</text>
</comment>
<name>HIS8_RUMCH</name>
<gene>
    <name evidence="1" type="primary">hisC</name>
    <name type="ordered locus">Ccel_0383</name>
</gene>
<keyword id="KW-0028">Amino-acid biosynthesis</keyword>
<keyword id="KW-0032">Aminotransferase</keyword>
<keyword id="KW-0368">Histidine biosynthesis</keyword>
<keyword id="KW-0663">Pyridoxal phosphate</keyword>
<keyword id="KW-1185">Reference proteome</keyword>
<keyword id="KW-0808">Transferase</keyword>